<sequence>MQTAYWVMVMMMVWITAPLSEGGKLNGEIRGLVSHILIPQHTLRSLTSRDRSDNGGSSGAQICIWKVCPPSPWR</sequence>
<protein>
    <recommendedName>
        <fullName evidence="4">Consomatin Ma1</fullName>
        <shortName evidence="5">ConSST Ma1</shortName>
    </recommendedName>
    <alternativeName>
        <fullName evidence="4">Somatostatin-related peptide</fullName>
        <shortName evidence="4">SSRP</shortName>
    </alternativeName>
</protein>
<proteinExistence type="inferred from homology"/>
<keyword id="KW-0208">D-amino acid</keyword>
<keyword id="KW-1015">Disulfide bond</keyword>
<keyword id="KW-1213">G-protein coupled receptor impairing toxin</keyword>
<keyword id="KW-0379">Hydroxylation</keyword>
<keyword id="KW-0964">Secreted</keyword>
<keyword id="KW-0732">Signal</keyword>
<keyword id="KW-0800">Toxin</keyword>
<name>CSST1_CONMA</name>
<reference evidence="8" key="1">
    <citation type="journal article" date="2019" name="Mar. Drugs">
        <title>Conotoxin diversity in the venom gland transcriptome of the Magician's Cone, Pionoconus magus.</title>
        <authorList>
            <person name="Pardos-Blas J.R."/>
            <person name="Irisarri I."/>
            <person name="Abalde S."/>
            <person name="Tenorio M.J."/>
            <person name="Zardoya R."/>
        </authorList>
    </citation>
    <scope>NUCLEOTIDE SEQUENCE [MRNA]</scope>
    <source>
        <tissue>Venom gland</tissue>
    </source>
</reference>
<reference key="2">
    <citation type="journal article" date="2022" name="Mol. Biol. Evol.">
        <title>Reconstructing the origins of the somatostatin and allatostatin-C signaling systems using the accelerated evolution of biodiverse cone snail venoms.</title>
        <authorList>
            <person name="Koch T.L."/>
            <person name="Ramiro I.B.L."/>
            <person name="Florez-Salcedo P."/>
            <person name="Engholm E."/>
            <person name="Jensen K.J."/>
            <person name="Chase K."/>
            <person name="Olivera B.M."/>
            <person name="Bjoern-Yoshimoto W.E."/>
            <person name="Safavi-Hemami H."/>
        </authorList>
    </citation>
    <scope>NUCLEOTIDE SEQUENCE [MRNA]</scope>
    <source>
        <tissue>Venom duct</tissue>
    </source>
</reference>
<comment type="function">
    <text evidence="1">Moderately activates human somatostatin receptors (SSTR) with a preferential activation of SSTR1 and SSTR4. In vivo, does not cause behavioral changes in mice within a few minutes of intracranial injection, but causes a progressive loss of movement thereafter. Four to five hours after injection, mice recover, even with the highest dose tested. Shows antinociception and antihyperalgesia activities in two mouse models of acute pain, most probably by acting outside the central nervous system.</text>
</comment>
<comment type="subcellular location">
    <subcellularLocation>
        <location evidence="6">Secreted</location>
    </subcellularLocation>
</comment>
<comment type="tissue specificity">
    <text evidence="6">Expressed by the venom duct.</text>
</comment>
<comment type="domain">
    <text evidence="5">The cysteine framework is C-C.</text>
</comment>
<comment type="miscellaneous">
    <text evidence="1">This peptide is an evolutionarily optimized stable analog of somatostatin. In addition, it adopts nearly identical conformations as in the somatostatin drug analog Octreotide. As this drug, it contains a D-Trp at the same position, whose synthesis is a common strategy used for enhancing the metabolic stability of compounds in drug design.</text>
</comment>
<comment type="miscellaneous">
    <text evidence="3">Consomatins evolved by gene duplication of a 'Somatostatin and related peptides (SSRP)' gene expressed in the snail neuroendocrine system.</text>
</comment>
<comment type="miscellaneous">
    <text evidence="1">Negative results: does not activate any of the other 313 GPCRs tested. Shows little or no activating activity at the SSTR2, SSTR3 and SSTR5.</text>
</comment>
<comment type="similarity">
    <text evidence="5">Belongs to the conotoxin C superfamily. Consomatin family.</text>
</comment>
<comment type="caution">
    <text evidence="5">The name 'Consomatin Ma1' has also been given to a peptide from Conus maioensis. As a consequence, we have suggested to rename the peptide from Conus maioensis 'Consomatin Mao1'.</text>
</comment>
<dbReference type="EMBL" id="BK011202">
    <property type="protein sequence ID" value="DAC80550.1"/>
    <property type="molecule type" value="mRNA"/>
</dbReference>
<dbReference type="GO" id="GO:0005576">
    <property type="term" value="C:extracellular region"/>
    <property type="evidence" value="ECO:0007669"/>
    <property type="project" value="UniProtKB-SubCell"/>
</dbReference>
<dbReference type="GO" id="GO:0090729">
    <property type="term" value="F:toxin activity"/>
    <property type="evidence" value="ECO:0007669"/>
    <property type="project" value="UniProtKB-KW"/>
</dbReference>
<organism>
    <name type="scientific">Conus magus</name>
    <name type="common">Magical cone</name>
    <dbReference type="NCBI Taxonomy" id="6492"/>
    <lineage>
        <taxon>Eukaryota</taxon>
        <taxon>Metazoa</taxon>
        <taxon>Spiralia</taxon>
        <taxon>Lophotrochozoa</taxon>
        <taxon>Mollusca</taxon>
        <taxon>Gastropoda</taxon>
        <taxon>Caenogastropoda</taxon>
        <taxon>Neogastropoda</taxon>
        <taxon>Conoidea</taxon>
        <taxon>Conidae</taxon>
        <taxon>Conus</taxon>
        <taxon>Pionoconus</taxon>
    </lineage>
</organism>
<evidence type="ECO:0000250" key="1">
    <source>
        <dbReference type="UniProtKB" id="P0DQT5"/>
    </source>
</evidence>
<evidence type="ECO:0000255" key="2"/>
<evidence type="ECO:0000269" key="3">
    <source>
    </source>
</evidence>
<evidence type="ECO:0000303" key="4">
    <source>
    </source>
</evidence>
<evidence type="ECO:0000305" key="5"/>
<evidence type="ECO:0000305" key="6">
    <source>
    </source>
</evidence>
<evidence type="ECO:0000305" key="7">
    <source>
    </source>
</evidence>
<evidence type="ECO:0000312" key="8">
    <source>
        <dbReference type="EMBL" id="DAC80550.1"/>
    </source>
</evidence>
<accession>A0A679PF76</accession>
<feature type="signal peptide" evidence="2">
    <location>
        <begin position="1"/>
        <end position="22"/>
    </location>
</feature>
<feature type="propeptide" id="PRO_0000456134" evidence="7">
    <location>
        <begin position="23"/>
        <end position="57"/>
    </location>
</feature>
<feature type="peptide" id="PRO_5025673322" description="Consomatin Ma1" evidence="7">
    <location>
        <begin position="52"/>
        <end position="73"/>
    </location>
</feature>
<feature type="modified residue" description="D-tryptophan" evidence="1">
    <location>
        <position position="65"/>
    </location>
</feature>
<feature type="modified residue" description="4-hydroxyproline" evidence="5">
    <location>
        <position position="69"/>
    </location>
</feature>
<feature type="modified residue" description="4-hydroxyproline" evidence="5">
    <location>
        <position position="70"/>
    </location>
</feature>
<feature type="modified residue" description="4-hydroxyproline" evidence="5">
    <location>
        <position position="72"/>
    </location>
</feature>
<feature type="disulfide bond" evidence="1">
    <location>
        <begin position="63"/>
        <end position="68"/>
    </location>
</feature>